<protein>
    <recommendedName>
        <fullName evidence="1">Large ribosomal subunit protein bL35</fullName>
    </recommendedName>
    <alternativeName>
        <fullName evidence="3">50S ribosomal protein L35</fullName>
    </alternativeName>
</protein>
<gene>
    <name evidence="1" type="primary">rpmI</name>
    <name type="ordered locus">SAR1759</name>
</gene>
<dbReference type="EMBL" id="BX571856">
    <property type="protein sequence ID" value="CAG40750.1"/>
    <property type="molecule type" value="Genomic_DNA"/>
</dbReference>
<dbReference type="RefSeq" id="WP_001125540.1">
    <property type="nucleotide sequence ID" value="NC_002952.2"/>
</dbReference>
<dbReference type="SMR" id="Q6GG26"/>
<dbReference type="GeneID" id="98346041"/>
<dbReference type="KEGG" id="sar:SAR1759"/>
<dbReference type="HOGENOM" id="CLU_169643_3_0_9"/>
<dbReference type="Proteomes" id="UP000000596">
    <property type="component" value="Chromosome"/>
</dbReference>
<dbReference type="GO" id="GO:0022625">
    <property type="term" value="C:cytosolic large ribosomal subunit"/>
    <property type="evidence" value="ECO:0007669"/>
    <property type="project" value="TreeGrafter"/>
</dbReference>
<dbReference type="GO" id="GO:0003735">
    <property type="term" value="F:structural constituent of ribosome"/>
    <property type="evidence" value="ECO:0007669"/>
    <property type="project" value="InterPro"/>
</dbReference>
<dbReference type="GO" id="GO:0006412">
    <property type="term" value="P:translation"/>
    <property type="evidence" value="ECO:0007669"/>
    <property type="project" value="UniProtKB-UniRule"/>
</dbReference>
<dbReference type="FunFam" id="4.10.410.60:FF:000001">
    <property type="entry name" value="50S ribosomal protein L35"/>
    <property type="match status" value="1"/>
</dbReference>
<dbReference type="Gene3D" id="4.10.410.60">
    <property type="match status" value="1"/>
</dbReference>
<dbReference type="HAMAP" id="MF_00514">
    <property type="entry name" value="Ribosomal_bL35"/>
    <property type="match status" value="1"/>
</dbReference>
<dbReference type="InterPro" id="IPR001706">
    <property type="entry name" value="Ribosomal_bL35"/>
</dbReference>
<dbReference type="InterPro" id="IPR021137">
    <property type="entry name" value="Ribosomal_bL35-like"/>
</dbReference>
<dbReference type="InterPro" id="IPR018265">
    <property type="entry name" value="Ribosomal_bL35_CS"/>
</dbReference>
<dbReference type="InterPro" id="IPR037229">
    <property type="entry name" value="Ribosomal_bL35_sf"/>
</dbReference>
<dbReference type="NCBIfam" id="TIGR00001">
    <property type="entry name" value="rpmI_bact"/>
    <property type="match status" value="1"/>
</dbReference>
<dbReference type="PANTHER" id="PTHR33343">
    <property type="entry name" value="54S RIBOSOMAL PROTEIN BL35M"/>
    <property type="match status" value="1"/>
</dbReference>
<dbReference type="PANTHER" id="PTHR33343:SF1">
    <property type="entry name" value="LARGE RIBOSOMAL SUBUNIT PROTEIN BL35M"/>
    <property type="match status" value="1"/>
</dbReference>
<dbReference type="Pfam" id="PF01632">
    <property type="entry name" value="Ribosomal_L35p"/>
    <property type="match status" value="1"/>
</dbReference>
<dbReference type="PRINTS" id="PR00064">
    <property type="entry name" value="RIBOSOMALL35"/>
</dbReference>
<dbReference type="SUPFAM" id="SSF143034">
    <property type="entry name" value="L35p-like"/>
    <property type="match status" value="1"/>
</dbReference>
<dbReference type="PROSITE" id="PS00936">
    <property type="entry name" value="RIBOSOMAL_L35"/>
    <property type="match status" value="1"/>
</dbReference>
<evidence type="ECO:0000255" key="1">
    <source>
        <dbReference type="HAMAP-Rule" id="MF_00514"/>
    </source>
</evidence>
<evidence type="ECO:0000256" key="2">
    <source>
        <dbReference type="SAM" id="MobiDB-lite"/>
    </source>
</evidence>
<evidence type="ECO:0000305" key="3"/>
<proteinExistence type="inferred from homology"/>
<keyword id="KW-0687">Ribonucleoprotein</keyword>
<keyword id="KW-0689">Ribosomal protein</keyword>
<accession>Q6GG26</accession>
<comment type="similarity">
    <text evidence="1">Belongs to the bacterial ribosomal protein bL35 family.</text>
</comment>
<name>RL35_STAAR</name>
<feature type="chain" id="PRO_0000177420" description="Large ribosomal subunit protein bL35">
    <location>
        <begin position="1"/>
        <end position="66"/>
    </location>
</feature>
<feature type="region of interest" description="Disordered" evidence="2">
    <location>
        <begin position="1"/>
        <end position="49"/>
    </location>
</feature>
<feature type="compositionally biased region" description="Basic residues" evidence="2">
    <location>
        <begin position="1"/>
        <end position="16"/>
    </location>
</feature>
<feature type="compositionally biased region" description="Basic residues" evidence="2">
    <location>
        <begin position="38"/>
        <end position="49"/>
    </location>
</feature>
<organism>
    <name type="scientific">Staphylococcus aureus (strain MRSA252)</name>
    <dbReference type="NCBI Taxonomy" id="282458"/>
    <lineage>
        <taxon>Bacteria</taxon>
        <taxon>Bacillati</taxon>
        <taxon>Bacillota</taxon>
        <taxon>Bacilli</taxon>
        <taxon>Bacillales</taxon>
        <taxon>Staphylococcaceae</taxon>
        <taxon>Staphylococcus</taxon>
    </lineage>
</organism>
<sequence length="66" mass="7697">MPKMKTHRGAAKRVKRTASGQLKRSRAFTSHLFANKSTKQKRQLRKARLVSKSDMKRVKQLLAYKK</sequence>
<reference key="1">
    <citation type="journal article" date="2004" name="Proc. Natl. Acad. Sci. U.S.A.">
        <title>Complete genomes of two clinical Staphylococcus aureus strains: evidence for the rapid evolution of virulence and drug resistance.</title>
        <authorList>
            <person name="Holden M.T.G."/>
            <person name="Feil E.J."/>
            <person name="Lindsay J.A."/>
            <person name="Peacock S.J."/>
            <person name="Day N.P.J."/>
            <person name="Enright M.C."/>
            <person name="Foster T.J."/>
            <person name="Moore C.E."/>
            <person name="Hurst L."/>
            <person name="Atkin R."/>
            <person name="Barron A."/>
            <person name="Bason N."/>
            <person name="Bentley S.D."/>
            <person name="Chillingworth C."/>
            <person name="Chillingworth T."/>
            <person name="Churcher C."/>
            <person name="Clark L."/>
            <person name="Corton C."/>
            <person name="Cronin A."/>
            <person name="Doggett J."/>
            <person name="Dowd L."/>
            <person name="Feltwell T."/>
            <person name="Hance Z."/>
            <person name="Harris B."/>
            <person name="Hauser H."/>
            <person name="Holroyd S."/>
            <person name="Jagels K."/>
            <person name="James K.D."/>
            <person name="Lennard N."/>
            <person name="Line A."/>
            <person name="Mayes R."/>
            <person name="Moule S."/>
            <person name="Mungall K."/>
            <person name="Ormond D."/>
            <person name="Quail M.A."/>
            <person name="Rabbinowitsch E."/>
            <person name="Rutherford K.M."/>
            <person name="Sanders M."/>
            <person name="Sharp S."/>
            <person name="Simmonds M."/>
            <person name="Stevens K."/>
            <person name="Whitehead S."/>
            <person name="Barrell B.G."/>
            <person name="Spratt B.G."/>
            <person name="Parkhill J."/>
        </authorList>
    </citation>
    <scope>NUCLEOTIDE SEQUENCE [LARGE SCALE GENOMIC DNA]</scope>
    <source>
        <strain>MRSA252</strain>
    </source>
</reference>